<feature type="chain" id="PRO_0000052950" description="Hemoglobin subunit beta-2">
    <location>
        <begin position="1"/>
        <end position="10" status="greater than"/>
    </location>
</feature>
<feature type="non-terminal residue">
    <location>
        <position position="10"/>
    </location>
</feature>
<comment type="function">
    <text>Involved in oxygen transport from the lung to the various peripheral tissues.</text>
</comment>
<comment type="subunit">
    <text>Heterotetramer of two alpha chains and two beta chains.</text>
</comment>
<comment type="tissue specificity">
    <text>Red blood cells.</text>
</comment>
<comment type="similarity">
    <text evidence="1">Belongs to the globin family.</text>
</comment>
<reference key="1">
    <citation type="journal article" date="2002" name="Biol. Chem.">
        <title>The primary structure of three hemoglobin chains from the indigo snake (Drymarchon corais erebennus, Serpentes): first evidence for alphaD chains and two beta chain types in snakes.</title>
        <authorList>
            <person name="Stoeckelhuber M."/>
            <person name="Gorr T."/>
            <person name="Kleinschmidt T."/>
        </authorList>
    </citation>
    <scope>PROTEIN SEQUENCE</scope>
</reference>
<name>HBB2_DRYME</name>
<evidence type="ECO:0000305" key="1"/>
<sequence>VHWSAEEKQL</sequence>
<keyword id="KW-0903">Direct protein sequencing</keyword>
<keyword id="KW-0349">Heme</keyword>
<keyword id="KW-0408">Iron</keyword>
<keyword id="KW-0479">Metal-binding</keyword>
<keyword id="KW-0561">Oxygen transport</keyword>
<keyword id="KW-0813">Transport</keyword>
<accession>P0C0U9</accession>
<organism>
    <name type="scientific">Drymarchon melanurus erebennus</name>
    <name type="common">Texas indigo snake</name>
    <name type="synonym">Drymarchon corais erebennus</name>
    <dbReference type="NCBI Taxonomy" id="358746"/>
    <lineage>
        <taxon>Eukaryota</taxon>
        <taxon>Metazoa</taxon>
        <taxon>Chordata</taxon>
        <taxon>Craniata</taxon>
        <taxon>Vertebrata</taxon>
        <taxon>Euteleostomi</taxon>
        <taxon>Lepidosauria</taxon>
        <taxon>Squamata</taxon>
        <taxon>Bifurcata</taxon>
        <taxon>Unidentata</taxon>
        <taxon>Episquamata</taxon>
        <taxon>Toxicofera</taxon>
        <taxon>Serpentes</taxon>
        <taxon>Colubroidea</taxon>
        <taxon>Colubridae</taxon>
        <taxon>Colubrinae</taxon>
        <taxon>Drymarchon</taxon>
    </lineage>
</organism>
<dbReference type="GO" id="GO:0046872">
    <property type="term" value="F:metal ion binding"/>
    <property type="evidence" value="ECO:0007669"/>
    <property type="project" value="UniProtKB-KW"/>
</dbReference>
<dbReference type="GO" id="GO:0005344">
    <property type="term" value="F:oxygen carrier activity"/>
    <property type="evidence" value="ECO:0007669"/>
    <property type="project" value="UniProtKB-KW"/>
</dbReference>
<proteinExistence type="evidence at protein level"/>
<protein>
    <recommendedName>
        <fullName>Hemoglobin subunit beta-2</fullName>
    </recommendedName>
    <alternativeName>
        <fullName>Beta-2-globin</fullName>
    </alternativeName>
    <alternativeName>
        <fullName>Hemoglobin beta-2 chain</fullName>
    </alternativeName>
    <alternativeName>
        <fullName>Hemoglobin beta-II chain</fullName>
    </alternativeName>
</protein>